<comment type="function">
    <text evidence="4">Seems to play a role in the inhibition of host innate immune repsonse.</text>
</comment>
<comment type="subcellular location">
    <subcellularLocation>
        <location evidence="5">Host membrane</location>
        <topology evidence="5">Multi-pass membrane protein</topology>
    </subcellularLocation>
    <subcellularLocation>
        <location evidence="4">Host Golgi apparatus</location>
    </subcellularLocation>
    <text>Also localizes in the host perinuclear area.</text>
</comment>
<feature type="chain" id="PRO_0000422438" description="Non-structural protein ORF5">
    <location>
        <begin position="1"/>
        <end position="224"/>
    </location>
</feature>
<feature type="transmembrane region" description="Helical" evidence="1">
    <location>
        <begin position="36"/>
        <end position="56"/>
    </location>
</feature>
<feature type="transmembrane region" description="Helical" evidence="1">
    <location>
        <begin position="68"/>
        <end position="88"/>
    </location>
</feature>
<feature type="transmembrane region" description="Helical" evidence="1">
    <location>
        <begin position="89"/>
        <end position="109"/>
    </location>
</feature>
<feature type="domain" description="CoV 3a-like viroporin TM" evidence="2">
    <location>
        <begin position="32"/>
        <end position="127"/>
    </location>
</feature>
<feature type="domain" description="CoV 3a-like viroporin CD" evidence="3">
    <location>
        <begin position="131"/>
        <end position="188"/>
    </location>
</feature>
<accession>K9N7D2</accession>
<reference key="1">
    <citation type="journal article" date="2012" name="Eurosurveillance">
        <title>Severe respiratory illness caused by a novel coronavirus, in a patient transferred to the United Kingdom from the Middle East, September 2012.</title>
        <authorList>
            <person name="Bermingham A."/>
            <person name="Chand M.A."/>
            <person name="Brown C.S."/>
            <person name="Aarons E."/>
            <person name="Tong C."/>
            <person name="Langrish C."/>
            <person name="Hoschler K."/>
            <person name="Brown K."/>
            <person name="Galiano M."/>
            <person name="Myers R."/>
            <person name="Pebody R.G."/>
            <person name="Green H.K."/>
            <person name="Boddington N.L."/>
            <person name="Gopal R."/>
            <person name="Price N."/>
            <person name="Newsholme W."/>
            <person name="Drosten C."/>
            <person name="Fouchier R.A."/>
            <person name="Zambon M."/>
        </authorList>
    </citation>
    <scope>NUCLEOTIDE SEQUENCE [GENOMIC RNA]</scope>
</reference>
<reference key="2">
    <citation type="journal article" date="2013" name="Protein Cell">
        <title>The structural and accessory proteins M, ORF 4a, ORF 4b, and ORF 5 of Middle East respiratory syndrome coronavirus (MERS-CoV) are potent interferon antagonists.</title>
        <authorList>
            <person name="Yang Y."/>
            <person name="Zhang L."/>
            <person name="Geng H."/>
            <person name="Deng Y."/>
            <person name="Huang B."/>
            <person name="Guo Y."/>
            <person name="Zhao Z."/>
            <person name="Tan W."/>
        </authorList>
    </citation>
    <scope>FUNCTION</scope>
    <scope>SUBCELLULAR LOCATION</scope>
</reference>
<keyword id="KW-1040">Host Golgi apparatus</keyword>
<keyword id="KW-1043">Host membrane</keyword>
<keyword id="KW-0945">Host-virus interaction</keyword>
<keyword id="KW-1090">Inhibition of host innate immune response by virus</keyword>
<keyword id="KW-0472">Membrane</keyword>
<keyword id="KW-1185">Reference proteome</keyword>
<keyword id="KW-0812">Transmembrane</keyword>
<keyword id="KW-1133">Transmembrane helix</keyword>
<keyword id="KW-0899">Viral immunoevasion</keyword>
<name>ORF5_MERS1</name>
<protein>
    <recommendedName>
        <fullName>Non-structural protein ORF5</fullName>
        <shortName>ORF5</shortName>
    </recommendedName>
</protein>
<organismHost>
    <name type="scientific">Camelus dromedarius</name>
    <name type="common">Dromedary</name>
    <name type="synonym">Arabian camel</name>
    <dbReference type="NCBI Taxonomy" id="9838"/>
</organismHost>
<organismHost>
    <name type="scientific">Homo sapiens</name>
    <name type="common">Human</name>
    <dbReference type="NCBI Taxonomy" id="9606"/>
</organismHost>
<sequence>MAFSASLFKPVQLVPVSPAFHRIESTDSIVFTYIPASGYVAALAVNVCLIPLLLLLRQDTCRRSIIRTMVLYFLVLYNFLLAIVLVNGVHYPTGSCLIAFLVILIILWFVDRIRFCLMLNSYIPLFDMRSHFIRVSTVSSHGMVPVIHTKPLFIRNFDQRCSCSRCFYLHSSTYIECTYISRFSKISLVSVTDFSLNGNVSTVFVPATRDSVPLHIIAPSSLIV</sequence>
<dbReference type="EMBL" id="KC164505">
    <property type="protein sequence ID" value="AFY13311.1"/>
    <property type="molecule type" value="Genomic_RNA"/>
</dbReference>
<dbReference type="RefSeq" id="YP_007188583.1">
    <property type="nucleotide sequence ID" value="NC_038294.1"/>
</dbReference>
<dbReference type="SMR" id="K9N7D2"/>
<dbReference type="BioGRID" id="4383881">
    <property type="interactions" value="5"/>
</dbReference>
<dbReference type="IntAct" id="K9N7D2">
    <property type="interactions" value="5"/>
</dbReference>
<dbReference type="GeneID" id="37616436"/>
<dbReference type="Proteomes" id="UP000139997">
    <property type="component" value="Genome"/>
</dbReference>
<dbReference type="GO" id="GO:0044177">
    <property type="term" value="C:host cell Golgi apparatus"/>
    <property type="evidence" value="ECO:0007669"/>
    <property type="project" value="UniProtKB-SubCell"/>
</dbReference>
<dbReference type="GO" id="GO:0033644">
    <property type="term" value="C:host cell membrane"/>
    <property type="evidence" value="ECO:0007669"/>
    <property type="project" value="UniProtKB-SubCell"/>
</dbReference>
<dbReference type="GO" id="GO:0016020">
    <property type="term" value="C:membrane"/>
    <property type="evidence" value="ECO:0007669"/>
    <property type="project" value="UniProtKB-KW"/>
</dbReference>
<dbReference type="GO" id="GO:0052170">
    <property type="term" value="P:symbiont-mediated suppression of host innate immune response"/>
    <property type="evidence" value="ECO:0007669"/>
    <property type="project" value="UniProtKB-KW"/>
</dbReference>
<dbReference type="GO" id="GO:0039502">
    <property type="term" value="P:symbiont-mediated suppression of host type I interferon-mediated signaling pathway"/>
    <property type="evidence" value="ECO:0000314"/>
    <property type="project" value="UniProtKB"/>
</dbReference>
<dbReference type="CDD" id="cd21645">
    <property type="entry name" value="MERS-CoV-like_ORF5"/>
    <property type="match status" value="1"/>
</dbReference>
<dbReference type="InterPro" id="IPR046446">
    <property type="entry name" value="a/bCoV_VIROPORIN_3A-like_CD"/>
</dbReference>
<dbReference type="InterPro" id="IPR046445">
    <property type="entry name" value="a/bCoV_VIROPORIN_3A-like_TM"/>
</dbReference>
<dbReference type="InterPro" id="IPR044323">
    <property type="entry name" value="MERS-CoV-like_ORF5"/>
</dbReference>
<dbReference type="PROSITE" id="PS51967">
    <property type="entry name" value="COV_VIROPORIN_3A_CD"/>
    <property type="match status" value="1"/>
</dbReference>
<dbReference type="PROSITE" id="PS51966">
    <property type="entry name" value="COV_VIROPORIN_3A_TM"/>
    <property type="match status" value="1"/>
</dbReference>
<organism>
    <name type="scientific">Middle East respiratory syndrome-related coronavirus (isolate United Kingdom/H123990006/2012)</name>
    <name type="common">MERS-CoV</name>
    <name type="synonym">Betacoronavirus England 1</name>
    <dbReference type="NCBI Taxonomy" id="1263720"/>
    <lineage>
        <taxon>Viruses</taxon>
        <taxon>Riboviria</taxon>
        <taxon>Orthornavirae</taxon>
        <taxon>Pisuviricota</taxon>
        <taxon>Pisoniviricetes</taxon>
        <taxon>Nidovirales</taxon>
        <taxon>Cornidovirineae</taxon>
        <taxon>Coronaviridae</taxon>
        <taxon>Orthocoronavirinae</taxon>
        <taxon>Betacoronavirus</taxon>
        <taxon>Merbecovirus</taxon>
        <taxon>Middle East respiratory syndrome-related coronavirus</taxon>
    </lineage>
</organism>
<gene>
    <name type="primary">ORF5</name>
</gene>
<evidence type="ECO:0000255" key="1"/>
<evidence type="ECO:0000255" key="2">
    <source>
        <dbReference type="PROSITE-ProRule" id="PRU01311"/>
    </source>
</evidence>
<evidence type="ECO:0000255" key="3">
    <source>
        <dbReference type="PROSITE-ProRule" id="PRU01312"/>
    </source>
</evidence>
<evidence type="ECO:0000269" key="4">
    <source>
    </source>
</evidence>
<evidence type="ECO:0000305" key="5"/>
<proteinExistence type="predicted"/>